<gene>
    <name evidence="1" type="primary">RBCS</name>
</gene>
<comment type="function">
    <text evidence="1">RuBisCO catalyzes two reactions: the carboxylation of D-ribulose 1,5-bisphosphate, the primary event in carbon dioxide fixation, as well as the oxidative fragmentation of the pentose substrate. Both reactions occur simultaneously and in competition at the same active site. Although the small subunit is not catalytic it is essential for maximal activity.</text>
</comment>
<comment type="subunit">
    <text evidence="1">Heterohexadecamer of 8 large and 8 small subunits.</text>
</comment>
<comment type="subcellular location">
    <subcellularLocation>
        <location evidence="1">Plastid</location>
        <location evidence="1">Chloroplast</location>
    </subcellularLocation>
</comment>
<comment type="miscellaneous">
    <text evidence="1">The basic functional RuBisCO is composed of a large chain homodimer in a 'head-to-tail' conformation. In form I RuBisCO this homodimer is arranged in a barrel-like tetramer with the small subunits forming a tetrameric 'cap' on each end of the 'barrel'.</text>
</comment>
<comment type="similarity">
    <text evidence="1">Belongs to the RuBisCO small chain family.</text>
</comment>
<sequence length="178" mass="20211">MASISSSVATVSRTAPAQANMVAPFTGLKSNAAFPTTKKANDFSTLPSNGGRVQCMKVWPPLGLKKYETLSYLPPLTETQLAKEVDYLLRKKWVPCLEFELEHGFVYRENARSPGYYDGRYWTMWKLPMFGCTDSAQVMKELAECKKEYPQAWIRIIGFDNVRQVQCIMFIASRPDGY</sequence>
<feature type="transit peptide" description="Chloroplast" evidence="1">
    <location>
        <begin position="1"/>
        <end position="54"/>
    </location>
</feature>
<feature type="chain" id="PRO_0000031507" description="Ribulose bisphosphate carboxylase small subunit, chloroplastic" evidence="1">
    <location>
        <begin position="55"/>
        <end position="178"/>
    </location>
</feature>
<name>RBS_HELAN</name>
<proteinExistence type="evidence at transcript level"/>
<keyword id="KW-0113">Calvin cycle</keyword>
<keyword id="KW-0120">Carbon dioxide fixation</keyword>
<keyword id="KW-0150">Chloroplast</keyword>
<keyword id="KW-0601">Photorespiration</keyword>
<keyword id="KW-0602">Photosynthesis</keyword>
<keyword id="KW-0934">Plastid</keyword>
<keyword id="KW-0809">Transit peptide</keyword>
<accession>P08705</accession>
<evidence type="ECO:0000255" key="1">
    <source>
        <dbReference type="HAMAP-Rule" id="MF_00860"/>
    </source>
</evidence>
<reference key="1">
    <citation type="journal article" date="1987" name="Nucleic Acids Res.">
        <title>Nucleotide sequence of a cDNA encoding the ribulose-1,5-bisphosphate carboxylase/oxygenase from sunflower (Helianthus annuus).</title>
        <authorList>
            <person name="Waksman G."/>
            <person name="Freyssinet G."/>
        </authorList>
    </citation>
    <scope>NUCLEOTIDE SEQUENCE [MRNA]</scope>
</reference>
<reference key="2">
    <citation type="journal article" date="1987" name="Nucleic Acids Res.">
        <title>Nucleotide sequence of a gene encoding sunflower ribulose-1,5-bisphosphate carboxylase/oxygenase small subunit (rbcs).</title>
        <authorList>
            <person name="Waksman G."/>
            <person name="Lebrun M."/>
            <person name="Freyssinet G."/>
        </authorList>
    </citation>
    <scope>NUCLEOTIDE SEQUENCE [GENOMIC DNA]</scope>
    <source>
        <strain>T 76 A</strain>
    </source>
</reference>
<protein>
    <recommendedName>
        <fullName evidence="1">Ribulose bisphosphate carboxylase small subunit, chloroplastic</fullName>
        <shortName evidence="1">RuBisCO small subunit</shortName>
    </recommendedName>
</protein>
<organism>
    <name type="scientific">Helianthus annuus</name>
    <name type="common">Common sunflower</name>
    <dbReference type="NCBI Taxonomy" id="4232"/>
    <lineage>
        <taxon>Eukaryota</taxon>
        <taxon>Viridiplantae</taxon>
        <taxon>Streptophyta</taxon>
        <taxon>Embryophyta</taxon>
        <taxon>Tracheophyta</taxon>
        <taxon>Spermatophyta</taxon>
        <taxon>Magnoliopsida</taxon>
        <taxon>eudicotyledons</taxon>
        <taxon>Gunneridae</taxon>
        <taxon>Pentapetalae</taxon>
        <taxon>asterids</taxon>
        <taxon>campanulids</taxon>
        <taxon>Asterales</taxon>
        <taxon>Asteraceae</taxon>
        <taxon>Asteroideae</taxon>
        <taxon>Heliantheae alliance</taxon>
        <taxon>Heliantheae</taxon>
        <taxon>Helianthus</taxon>
    </lineage>
</organism>
<dbReference type="EMBL" id="X05079">
    <property type="protein sequence ID" value="CAA28737.1"/>
    <property type="molecule type" value="mRNA"/>
</dbReference>
<dbReference type="EMBL" id="Y00431">
    <property type="protein sequence ID" value="CAA68490.1"/>
    <property type="molecule type" value="Genomic_DNA"/>
</dbReference>
<dbReference type="PIR" id="A26852">
    <property type="entry name" value="RKFSS"/>
</dbReference>
<dbReference type="SMR" id="P08705"/>
<dbReference type="EnsemblPlants" id="mRNA:HanXRQr2_Chr11g0470681">
    <property type="protein sequence ID" value="mRNA:HanXRQr2_Chr11g0470681"/>
    <property type="gene ID" value="HanXRQr2_Chr11g0470681"/>
</dbReference>
<dbReference type="EnsemblPlants" id="mRNA:HanXRQr2_Chr11g0470711">
    <property type="protein sequence ID" value="mRNA:HanXRQr2_Chr11g0470711"/>
    <property type="gene ID" value="HanXRQr2_Chr11g0470711"/>
</dbReference>
<dbReference type="Gramene" id="mRNA:HanXRQr2_Chr11g0470681">
    <property type="protein sequence ID" value="mRNA:HanXRQr2_Chr11g0470681"/>
    <property type="gene ID" value="HanXRQr2_Chr11g0470681"/>
</dbReference>
<dbReference type="Gramene" id="mRNA:HanXRQr2_Chr11g0470711">
    <property type="protein sequence ID" value="mRNA:HanXRQr2_Chr11g0470711"/>
    <property type="gene ID" value="HanXRQr2_Chr11g0470711"/>
</dbReference>
<dbReference type="OMA" id="HGNKMFE"/>
<dbReference type="OrthoDB" id="561at2759"/>
<dbReference type="GO" id="GO:0009507">
    <property type="term" value="C:chloroplast"/>
    <property type="evidence" value="ECO:0007669"/>
    <property type="project" value="UniProtKB-SubCell"/>
</dbReference>
<dbReference type="GO" id="GO:0016984">
    <property type="term" value="F:ribulose-bisphosphate carboxylase activity"/>
    <property type="evidence" value="ECO:0007669"/>
    <property type="project" value="UniProtKB-UniRule"/>
</dbReference>
<dbReference type="GO" id="GO:0009853">
    <property type="term" value="P:photorespiration"/>
    <property type="evidence" value="ECO:0007669"/>
    <property type="project" value="UniProtKB-KW"/>
</dbReference>
<dbReference type="GO" id="GO:0019253">
    <property type="term" value="P:reductive pentose-phosphate cycle"/>
    <property type="evidence" value="ECO:0007669"/>
    <property type="project" value="UniProtKB-UniRule"/>
</dbReference>
<dbReference type="CDD" id="cd03527">
    <property type="entry name" value="RuBisCO_small"/>
    <property type="match status" value="1"/>
</dbReference>
<dbReference type="FunFam" id="3.30.190.10:FF:000001">
    <property type="entry name" value="Ribulose bisphosphate carboxylase small chain, chloroplastic"/>
    <property type="match status" value="1"/>
</dbReference>
<dbReference type="Gene3D" id="3.30.190.10">
    <property type="entry name" value="Ribulose bisphosphate carboxylase, small subunit"/>
    <property type="match status" value="1"/>
</dbReference>
<dbReference type="HAMAP" id="MF_00859">
    <property type="entry name" value="RuBisCO_S_bact"/>
    <property type="match status" value="1"/>
</dbReference>
<dbReference type="InterPro" id="IPR024681">
    <property type="entry name" value="RuBisCO_ssu"/>
</dbReference>
<dbReference type="InterPro" id="IPR000894">
    <property type="entry name" value="RuBisCO_ssu_dom"/>
</dbReference>
<dbReference type="InterPro" id="IPR024680">
    <property type="entry name" value="RuBisCO_ssu_N"/>
</dbReference>
<dbReference type="InterPro" id="IPR036385">
    <property type="entry name" value="RuBisCO_ssu_sf"/>
</dbReference>
<dbReference type="PANTHER" id="PTHR31262">
    <property type="entry name" value="RIBULOSE BISPHOSPHATE CARBOXYLASE SMALL CHAIN 1, CHLOROPLASTIC"/>
    <property type="match status" value="1"/>
</dbReference>
<dbReference type="PANTHER" id="PTHR31262:SF10">
    <property type="entry name" value="RIBULOSE BISPHOSPHATE CARBOXYLASE SMALL SUBUNIT 1A, CHLOROPLASTIC-RELATED"/>
    <property type="match status" value="1"/>
</dbReference>
<dbReference type="Pfam" id="PF12338">
    <property type="entry name" value="RbcS"/>
    <property type="match status" value="1"/>
</dbReference>
<dbReference type="Pfam" id="PF00101">
    <property type="entry name" value="RuBisCO_small"/>
    <property type="match status" value="1"/>
</dbReference>
<dbReference type="PRINTS" id="PR00152">
    <property type="entry name" value="RUBISCOSMALL"/>
</dbReference>
<dbReference type="SMART" id="SM00961">
    <property type="entry name" value="RuBisCO_small"/>
    <property type="match status" value="1"/>
</dbReference>
<dbReference type="SUPFAM" id="SSF55239">
    <property type="entry name" value="RuBisCO, small subunit"/>
    <property type="match status" value="1"/>
</dbReference>